<comment type="function">
    <text evidence="1 3 4 5">Pathogenicity determinant (By similarity). May act as a suppressor of RNA-mediated gene silencing, also known as post-transcriptional gene silencing (PTGS), a mechanism of plant viral defense that limits the accumulation of viral RNAs. May repress the AL61 promoter.</text>
</comment>
<comment type="subunit">
    <text evidence="2">Interacts with Arabidopsis thaliana ASK7/ASK-eta and ASK6/ASK-zeta proteins.</text>
</comment>
<comment type="subcellular location">
    <subcellularLocation>
        <location evidence="2">Host cell membrane</location>
        <topology evidence="2">Lipid-anchor</topology>
    </subcellularLocation>
    <text>Localizes to the cell periphery.</text>
</comment>
<comment type="PTM">
    <text evidence="2">Phosphorylated by Arabidopsis thaliana ASK7/ASK-eta mainly on threonine and serine residues.</text>
</comment>
<comment type="similarity">
    <text evidence="6">Belongs to the geminiviridae protein AC4/C4 family.</text>
</comment>
<organismHost>
    <name type="scientific">Solanum lycopersicum</name>
    <name type="common">Tomato</name>
    <name type="synonym">Lycopersicon esculentum</name>
    <dbReference type="NCBI Taxonomy" id="4081"/>
</organismHost>
<reference key="1">
    <citation type="journal article" date="1984" name="EMBO J.">
        <title>Complete nucleotide sequence of the infectious cloned DNA components of tomato golden mosaic virus: potential coding regions and regulatory sequences.</title>
        <authorList>
            <person name="Hamilton W.D.O."/>
            <person name="Stein V.E."/>
            <person name="Coutts R.H.A."/>
            <person name="Buck K.W."/>
        </authorList>
    </citation>
    <scope>NUCLEOTIDE SEQUENCE [GENOMIC DNA]</scope>
</reference>
<reference key="2">
    <citation type="journal article" date="1994" name="J. Gen. Virol.">
        <title>Simultaneous regulation of tomato golden mosaic virus coat protein and AL1 gene expression: expression of the AL4 gene may contribute to suppression of the AL1 gene.</title>
        <authorList>
            <person name="Groening B.R."/>
            <person name="Hayes R.J."/>
            <person name="Buck K.W."/>
        </authorList>
    </citation>
    <scope>FUNCTION</scope>
</reference>
<reference key="3">
    <citation type="journal article" date="1996" name="J. Gen. Virol.">
        <title>Tomato golden mosaic virus open reading frame AL4 is genetically distinct from its C4 analogue in monopartite geminiviruses.</title>
        <authorList>
            <person name="Pooma W."/>
            <person name="Petty I.T.D."/>
        </authorList>
    </citation>
    <scope>FUNCTION</scope>
</reference>
<reference key="4">
    <citation type="journal article" date="1997" name="J. Virol.">
        <title>cis elements that contribute to geminivirus transcriptional regulation and the efficiency of DNA replication.</title>
        <authorList>
            <person name="Eagle P.A."/>
            <person name="Hanley-Bowdoin L."/>
        </authorList>
    </citation>
    <scope>FUNCTION</scope>
</reference>
<reference key="5">
    <citation type="journal article" date="2007" name="Virology">
        <title>Geminivirus pathogenicity protein C4 interacts with Arabidopsis thaliana shaggy-related protein kinase AtSKeta, a component of the brassinosteroid signalling pathway.</title>
        <authorList>
            <person name="Piroux N."/>
            <person name="Saunders K."/>
            <person name="Page A."/>
            <person name="Stanley J."/>
        </authorList>
    </citation>
    <scope>SUBCELLULAR LOCATION</scope>
    <scope>INTERACTION WITH ARABIDOPSIS THALIANA ASK7/ASK-ETA</scope>
    <scope>MUTAGENESIS OF ARG-44; LEU-45; ARG-49 AND ARG-50</scope>
    <scope>PHOSPHORYLATION BY ARABIDOPSIS THALIANA ASK7/ASK-ETA</scope>
</reference>
<gene>
    <name type="ORF">AC4</name>
    <name type="ORF">AL4</name>
</gene>
<name>AC4_TGMVY</name>
<organism>
    <name type="scientific">Tomato golden mosaic virus (strain Yellow vein)</name>
    <name type="common">TGMV</name>
    <dbReference type="NCBI Taxonomy" id="223341"/>
    <lineage>
        <taxon>Viruses</taxon>
        <taxon>Monodnaviria</taxon>
        <taxon>Shotokuvirae</taxon>
        <taxon>Cressdnaviricota</taxon>
        <taxon>Repensiviricetes</taxon>
        <taxon>Geplafuvirales</taxon>
        <taxon>Geminiviridae</taxon>
        <taxon>Begomovirus</taxon>
        <taxon>Tomato golden mosaic virus</taxon>
    </lineage>
</organism>
<proteinExistence type="evidence at protein level"/>
<dbReference type="EMBL" id="K02029">
    <property type="status" value="NOT_ANNOTATED_CDS"/>
    <property type="molecule type" value="Genomic_DNA"/>
</dbReference>
<dbReference type="SMR" id="P0C2W9"/>
<dbReference type="Proteomes" id="UP000007405">
    <property type="component" value="Genome"/>
</dbReference>
<dbReference type="GO" id="GO:0020002">
    <property type="term" value="C:host cell plasma membrane"/>
    <property type="evidence" value="ECO:0007669"/>
    <property type="project" value="UniProtKB-SubCell"/>
</dbReference>
<dbReference type="GO" id="GO:0016020">
    <property type="term" value="C:membrane"/>
    <property type="evidence" value="ECO:0007669"/>
    <property type="project" value="UniProtKB-KW"/>
</dbReference>
<dbReference type="InterPro" id="IPR002488">
    <property type="entry name" value="Gemini_C4"/>
</dbReference>
<dbReference type="Pfam" id="PF01492">
    <property type="entry name" value="Gemini_C4"/>
    <property type="match status" value="1"/>
</dbReference>
<accession>P0C2W9</accession>
<sequence>MGNLTSTCLFSSRENTAAKINDSSTWYPQQGQHISIQTFRELNRLPTSRRTSTKTEILLYGENSRSTVEVLEEVAKHLTTLQQRR</sequence>
<feature type="initiator methionine" description="Removed" evidence="1">
    <location>
        <position position="1"/>
    </location>
</feature>
<feature type="chain" id="PRO_0000287220" description="Protein AC4">
    <location>
        <begin position="2"/>
        <end position="85"/>
    </location>
</feature>
<feature type="lipid moiety-binding region" description="N-myristoyl glycine; by host" evidence="1">
    <location>
        <position position="2"/>
    </location>
</feature>
<feature type="mutagenesis site" description="Enhanced pathogenicity on N.benthamiana; when associated with A-45; S-49 and P-50." evidence="2">
    <original>R</original>
    <variation>P</variation>
    <location>
        <position position="44"/>
    </location>
</feature>
<feature type="mutagenesis site" description="Enhanced pathogenicity on N.benthamiana; when associated with P-44; S-49 and P-50." evidence="2">
    <original>L</original>
    <variation>A</variation>
    <location>
        <position position="45"/>
    </location>
</feature>
<feature type="mutagenesis site" description="Enhanced pathogenicity on N.benthamiana; when associated with P-44; A-45 and P-50." evidence="2">
    <original>R</original>
    <variation>S</variation>
    <location>
        <position position="49"/>
    </location>
</feature>
<feature type="mutagenesis site" description="Enhanced pathogenicity on N.benthamiana; when associated with P-44; A-45 and S-49." evidence="2">
    <original>R</original>
    <variation>P</variation>
    <location>
        <position position="50"/>
    </location>
</feature>
<evidence type="ECO:0000250" key="1"/>
<evidence type="ECO:0000269" key="2">
    <source>
    </source>
</evidence>
<evidence type="ECO:0000269" key="3">
    <source>
    </source>
</evidence>
<evidence type="ECO:0000269" key="4">
    <source>
    </source>
</evidence>
<evidence type="ECO:0000269" key="5">
    <source>
    </source>
</evidence>
<evidence type="ECO:0000305" key="6"/>
<protein>
    <recommendedName>
        <fullName>Protein AC4</fullName>
    </recommendedName>
    <alternativeName>
        <fullName>Protein AL4</fullName>
    </alternativeName>
</protein>
<keyword id="KW-1032">Host cell membrane</keyword>
<keyword id="KW-1043">Host membrane</keyword>
<keyword id="KW-0945">Host-virus interaction</keyword>
<keyword id="KW-0449">Lipoprotein</keyword>
<keyword id="KW-0472">Membrane</keyword>
<keyword id="KW-0519">Myristate</keyword>
<keyword id="KW-0597">Phosphoprotein</keyword>
<keyword id="KW-1185">Reference proteome</keyword>